<organism>
    <name type="scientific">Burkholderia pseudomallei (strain 1710b)</name>
    <dbReference type="NCBI Taxonomy" id="320372"/>
    <lineage>
        <taxon>Bacteria</taxon>
        <taxon>Pseudomonadati</taxon>
        <taxon>Pseudomonadota</taxon>
        <taxon>Betaproteobacteria</taxon>
        <taxon>Burkholderiales</taxon>
        <taxon>Burkholderiaceae</taxon>
        <taxon>Burkholderia</taxon>
        <taxon>pseudomallei group</taxon>
    </lineage>
</organism>
<feature type="chain" id="PRO_0000226486" description="Small ribosomal subunit protein uS7">
    <location>
        <begin position="1"/>
        <end position="156"/>
    </location>
</feature>
<proteinExistence type="inferred from homology"/>
<protein>
    <recommendedName>
        <fullName evidence="1">Small ribosomal subunit protein uS7</fullName>
    </recommendedName>
    <alternativeName>
        <fullName evidence="2">30S ribosomal protein S7</fullName>
    </alternativeName>
</protein>
<gene>
    <name evidence="1" type="primary">rpsG</name>
    <name type="ordered locus">BURPS1710b_3781</name>
</gene>
<name>RS7_BURP1</name>
<dbReference type="EMBL" id="CP000124">
    <property type="protein sequence ID" value="ABA48078.1"/>
    <property type="molecule type" value="Genomic_DNA"/>
</dbReference>
<dbReference type="RefSeq" id="WP_004198359.1">
    <property type="nucleotide sequence ID" value="NC_007434.1"/>
</dbReference>
<dbReference type="SMR" id="Q3JMQ8"/>
<dbReference type="EnsemblBacteria" id="ABA48078">
    <property type="protein sequence ID" value="ABA48078"/>
    <property type="gene ID" value="BURPS1710b_3781"/>
</dbReference>
<dbReference type="GeneID" id="93171021"/>
<dbReference type="KEGG" id="bpm:BURPS1710b_3781"/>
<dbReference type="HOGENOM" id="CLU_072226_1_1_4"/>
<dbReference type="Proteomes" id="UP000002700">
    <property type="component" value="Chromosome I"/>
</dbReference>
<dbReference type="GO" id="GO:0015935">
    <property type="term" value="C:small ribosomal subunit"/>
    <property type="evidence" value="ECO:0007669"/>
    <property type="project" value="InterPro"/>
</dbReference>
<dbReference type="GO" id="GO:0019843">
    <property type="term" value="F:rRNA binding"/>
    <property type="evidence" value="ECO:0007669"/>
    <property type="project" value="UniProtKB-UniRule"/>
</dbReference>
<dbReference type="GO" id="GO:0003735">
    <property type="term" value="F:structural constituent of ribosome"/>
    <property type="evidence" value="ECO:0007669"/>
    <property type="project" value="InterPro"/>
</dbReference>
<dbReference type="GO" id="GO:0000049">
    <property type="term" value="F:tRNA binding"/>
    <property type="evidence" value="ECO:0007669"/>
    <property type="project" value="UniProtKB-UniRule"/>
</dbReference>
<dbReference type="GO" id="GO:0006412">
    <property type="term" value="P:translation"/>
    <property type="evidence" value="ECO:0007669"/>
    <property type="project" value="UniProtKB-UniRule"/>
</dbReference>
<dbReference type="CDD" id="cd14869">
    <property type="entry name" value="uS7_Bacteria"/>
    <property type="match status" value="1"/>
</dbReference>
<dbReference type="FunFam" id="1.10.455.10:FF:000001">
    <property type="entry name" value="30S ribosomal protein S7"/>
    <property type="match status" value="1"/>
</dbReference>
<dbReference type="Gene3D" id="1.10.455.10">
    <property type="entry name" value="Ribosomal protein S7 domain"/>
    <property type="match status" value="1"/>
</dbReference>
<dbReference type="HAMAP" id="MF_00480_B">
    <property type="entry name" value="Ribosomal_uS7_B"/>
    <property type="match status" value="1"/>
</dbReference>
<dbReference type="InterPro" id="IPR000235">
    <property type="entry name" value="Ribosomal_uS7"/>
</dbReference>
<dbReference type="InterPro" id="IPR005717">
    <property type="entry name" value="Ribosomal_uS7_bac/org-type"/>
</dbReference>
<dbReference type="InterPro" id="IPR020606">
    <property type="entry name" value="Ribosomal_uS7_CS"/>
</dbReference>
<dbReference type="InterPro" id="IPR023798">
    <property type="entry name" value="Ribosomal_uS7_dom"/>
</dbReference>
<dbReference type="InterPro" id="IPR036823">
    <property type="entry name" value="Ribosomal_uS7_dom_sf"/>
</dbReference>
<dbReference type="NCBIfam" id="TIGR01029">
    <property type="entry name" value="rpsG_bact"/>
    <property type="match status" value="1"/>
</dbReference>
<dbReference type="PANTHER" id="PTHR11205">
    <property type="entry name" value="RIBOSOMAL PROTEIN S7"/>
    <property type="match status" value="1"/>
</dbReference>
<dbReference type="Pfam" id="PF00177">
    <property type="entry name" value="Ribosomal_S7"/>
    <property type="match status" value="1"/>
</dbReference>
<dbReference type="PIRSF" id="PIRSF002122">
    <property type="entry name" value="RPS7p_RPS7a_RPS5e_RPS7o"/>
    <property type="match status" value="1"/>
</dbReference>
<dbReference type="SUPFAM" id="SSF47973">
    <property type="entry name" value="Ribosomal protein S7"/>
    <property type="match status" value="1"/>
</dbReference>
<dbReference type="PROSITE" id="PS00052">
    <property type="entry name" value="RIBOSOMAL_S7"/>
    <property type="match status" value="1"/>
</dbReference>
<comment type="function">
    <text evidence="1">One of the primary rRNA binding proteins, it binds directly to 16S rRNA where it nucleates assembly of the head domain of the 30S subunit. Is located at the subunit interface close to the decoding center, probably blocks exit of the E-site tRNA.</text>
</comment>
<comment type="subunit">
    <text evidence="1">Part of the 30S ribosomal subunit. Contacts proteins S9 and S11.</text>
</comment>
<comment type="similarity">
    <text evidence="1">Belongs to the universal ribosomal protein uS7 family.</text>
</comment>
<keyword id="KW-0687">Ribonucleoprotein</keyword>
<keyword id="KW-0689">Ribosomal protein</keyword>
<keyword id="KW-0694">RNA-binding</keyword>
<keyword id="KW-0699">rRNA-binding</keyword>
<keyword id="KW-0820">tRNA-binding</keyword>
<reference key="1">
    <citation type="journal article" date="2010" name="Genome Biol. Evol.">
        <title>Continuing evolution of Burkholderia mallei through genome reduction and large-scale rearrangements.</title>
        <authorList>
            <person name="Losada L."/>
            <person name="Ronning C.M."/>
            <person name="DeShazer D."/>
            <person name="Woods D."/>
            <person name="Fedorova N."/>
            <person name="Kim H.S."/>
            <person name="Shabalina S.A."/>
            <person name="Pearson T.R."/>
            <person name="Brinkac L."/>
            <person name="Tan P."/>
            <person name="Nandi T."/>
            <person name="Crabtree J."/>
            <person name="Badger J."/>
            <person name="Beckstrom-Sternberg S."/>
            <person name="Saqib M."/>
            <person name="Schutzer S.E."/>
            <person name="Keim P."/>
            <person name="Nierman W.C."/>
        </authorList>
    </citation>
    <scope>NUCLEOTIDE SEQUENCE [LARGE SCALE GENOMIC DNA]</scope>
    <source>
        <strain>1710b</strain>
    </source>
</reference>
<accession>Q3JMQ8</accession>
<evidence type="ECO:0000255" key="1">
    <source>
        <dbReference type="HAMAP-Rule" id="MF_00480"/>
    </source>
</evidence>
<evidence type="ECO:0000305" key="2"/>
<sequence>MPRRREVPKREVLPDPKYGNVDVAKFMNMLMLSGKKSVAERIVYGAFEQIQTKGGKDPLEVFTVALNNVKPVVEVKSRRVGGANYQVPVEVRPSRRMALAMRWLREAAKKRSEKSMALRLAGELSEAAEGRGGAMKKRDEVHRMAEANRAFSHFRF</sequence>